<protein>
    <recommendedName>
        <fullName evidence="5">Tryptophan N-monooxygenase CYP79A68</fullName>
        <ecNumber evidence="4">1.14.14.156</ecNumber>
    </recommendedName>
    <alternativeName>
        <fullName evidence="5">Cytochrome P450 79A68</fullName>
    </alternativeName>
</protein>
<comment type="function">
    <text evidence="4">Catalyzes with low efficiency E and Z isomers of indole-3-acetaldoxime from tryptophan (Trp).</text>
</comment>
<comment type="catalytic activity">
    <reaction evidence="4">
        <text>L-tryptophan + 2 reduced [NADPH--hemoprotein reductase] + 2 O2 = (E)-(indol-3-yl)acetaldehyde oxime + 2 oxidized [NADPH--hemoprotein reductase] + CO2 + 3 H2O + 2 H(+)</text>
        <dbReference type="Rhea" id="RHEA:33279"/>
        <dbReference type="Rhea" id="RHEA-COMP:11964"/>
        <dbReference type="Rhea" id="RHEA-COMP:11965"/>
        <dbReference type="ChEBI" id="CHEBI:15377"/>
        <dbReference type="ChEBI" id="CHEBI:15378"/>
        <dbReference type="ChEBI" id="CHEBI:15379"/>
        <dbReference type="ChEBI" id="CHEBI:16526"/>
        <dbReference type="ChEBI" id="CHEBI:17545"/>
        <dbReference type="ChEBI" id="CHEBI:57618"/>
        <dbReference type="ChEBI" id="CHEBI:57912"/>
        <dbReference type="ChEBI" id="CHEBI:58210"/>
        <dbReference type="EC" id="1.14.14.156"/>
    </reaction>
</comment>
<comment type="cofactor">
    <cofactor evidence="1">
        <name>heme</name>
        <dbReference type="ChEBI" id="CHEBI:30413"/>
    </cofactor>
</comment>
<comment type="subcellular location">
    <subcellularLocation>
        <location evidence="2">Membrane</location>
        <topology evidence="2">Single-pass membrane protein</topology>
    </subcellularLocation>
</comment>
<comment type="tissue specificity">
    <text evidence="4">Confined to buds.</text>
</comment>
<comment type="similarity">
    <text evidence="6">Belongs to the cytochrome P450 family.</text>
</comment>
<gene>
    <name evidence="5" type="primary">CYP79A68</name>
</gene>
<organism>
    <name type="scientific">Prunus mume</name>
    <name type="common">Japanese apricot</name>
    <name type="synonym">Armeniaca mume</name>
    <dbReference type="NCBI Taxonomy" id="102107"/>
    <lineage>
        <taxon>Eukaryota</taxon>
        <taxon>Viridiplantae</taxon>
        <taxon>Streptophyta</taxon>
        <taxon>Embryophyta</taxon>
        <taxon>Tracheophyta</taxon>
        <taxon>Spermatophyta</taxon>
        <taxon>Magnoliopsida</taxon>
        <taxon>eudicotyledons</taxon>
        <taxon>Gunneridae</taxon>
        <taxon>Pentapetalae</taxon>
        <taxon>rosids</taxon>
        <taxon>fabids</taxon>
        <taxon>Rosales</taxon>
        <taxon>Rosaceae</taxon>
        <taxon>Amygdaloideae</taxon>
        <taxon>Amygdaleae</taxon>
        <taxon>Prunus</taxon>
    </lineage>
</organism>
<dbReference type="EC" id="1.14.14.156" evidence="4"/>
<dbReference type="EMBL" id="AB920487">
    <property type="protein sequence ID" value="BAP15883.1"/>
    <property type="molecule type" value="mRNA"/>
</dbReference>
<dbReference type="RefSeq" id="NP_001313445.1">
    <property type="nucleotide sequence ID" value="NM_001326516.1"/>
</dbReference>
<dbReference type="SMR" id="A0A068Q605"/>
<dbReference type="GlyCosmos" id="A0A068Q605">
    <property type="glycosylation" value="1 site, No reported glycans"/>
</dbReference>
<dbReference type="GeneID" id="103339830"/>
<dbReference type="Proteomes" id="UP000694861">
    <property type="component" value="Unplaced"/>
</dbReference>
<dbReference type="GO" id="GO:0016020">
    <property type="term" value="C:membrane"/>
    <property type="evidence" value="ECO:0007669"/>
    <property type="project" value="UniProtKB-SubCell"/>
</dbReference>
<dbReference type="GO" id="GO:0020037">
    <property type="term" value="F:heme binding"/>
    <property type="evidence" value="ECO:0007669"/>
    <property type="project" value="InterPro"/>
</dbReference>
<dbReference type="GO" id="GO:0005506">
    <property type="term" value="F:iron ion binding"/>
    <property type="evidence" value="ECO:0007669"/>
    <property type="project" value="InterPro"/>
</dbReference>
<dbReference type="GO" id="GO:0090489">
    <property type="term" value="F:tryptophan N-monooxygenase activity"/>
    <property type="evidence" value="ECO:0007669"/>
    <property type="project" value="UniProtKB-EC"/>
</dbReference>
<dbReference type="FunFam" id="1.10.630.10:FF:000037">
    <property type="entry name" value="Cytochrome P450 9"/>
    <property type="match status" value="1"/>
</dbReference>
<dbReference type="Gene3D" id="1.10.630.10">
    <property type="entry name" value="Cytochrome P450"/>
    <property type="match status" value="1"/>
</dbReference>
<dbReference type="InterPro" id="IPR001128">
    <property type="entry name" value="Cyt_P450"/>
</dbReference>
<dbReference type="InterPro" id="IPR017972">
    <property type="entry name" value="Cyt_P450_CS"/>
</dbReference>
<dbReference type="InterPro" id="IPR002401">
    <property type="entry name" value="Cyt_P450_E_grp-I"/>
</dbReference>
<dbReference type="InterPro" id="IPR036396">
    <property type="entry name" value="Cyt_P450_sf"/>
</dbReference>
<dbReference type="PANTHER" id="PTHR47944:SF19">
    <property type="entry name" value="CYTOCHROME P450 77A4"/>
    <property type="match status" value="1"/>
</dbReference>
<dbReference type="PANTHER" id="PTHR47944">
    <property type="entry name" value="CYTOCHROME P450 98A9"/>
    <property type="match status" value="1"/>
</dbReference>
<dbReference type="Pfam" id="PF00067">
    <property type="entry name" value="p450"/>
    <property type="match status" value="1"/>
</dbReference>
<dbReference type="PRINTS" id="PR00463">
    <property type="entry name" value="EP450I"/>
</dbReference>
<dbReference type="PRINTS" id="PR00385">
    <property type="entry name" value="P450"/>
</dbReference>
<dbReference type="SUPFAM" id="SSF48264">
    <property type="entry name" value="Cytochrome P450"/>
    <property type="match status" value="1"/>
</dbReference>
<dbReference type="PROSITE" id="PS00086">
    <property type="entry name" value="CYTOCHROME_P450"/>
    <property type="match status" value="1"/>
</dbReference>
<accession>A0A068Q605</accession>
<sequence>MSLPYLFLDSEVTPPISLSLAFIIFMFLVKFILKTHNKNSVPVVPLPPGPSPWPIVGSLPEMWRNRPAHRWIHSLMKKLNTDIACIRLGNVHVIPVTSPEIAREFLKKNDAVFASRPVTMATKTLSSGYLTTVVGPWGDQWRKMRRVLVAEAFNPSRVHWLLGKRNEEADNLVKFLYNQCSANQNGAVVNVRIAAQFYSGSIMRKMIFNRTYFGKGREDGGPGVEEEEHVSALLTLLTYAYAFCVSDYLPWLRVFDIDGHEKKVRKAMNIVKKHQEPIVNERLQEWRDGKRNEPDDLLDVFISLKDANGQPLLSDEEIKAQTTELQLSTVDSPFNIAEWALTEMLNQPEMLKKAEEELDRVVGKKTLVQESHVPHLPYIRACAKEVMRLHPVGPFNLPHVSIADAEVAGYFIPKGSNVILSRLELGRNPRVWEEPLRFNPERHLNIAVDQQVDLEENDLRFVSFSTGRRGCMGVGLGSTIVVMLLARLLQGFSWSLPPDVDKIDFTEDQIYLKKASPLLAQAKPRLPASVYPI</sequence>
<reference key="1">
    <citation type="journal article" date="2014" name="Plant Mol. Biol.">
        <title>Identification and characterization of CYP79D16 and CYP71AN24 catalyzing the first and second steps in L-phenylalanine-derived cyanogenic glycoside biosynthesis in the Japanese apricot, Prunus mume Sieb. et Zucc.</title>
        <authorList>
            <person name="Yamaguchi T."/>
            <person name="Yamamoto K."/>
            <person name="Asano Y."/>
        </authorList>
    </citation>
    <scope>NUCLEOTIDE SEQUENCE [MRNA]</scope>
    <scope>FUNCTION</scope>
    <scope>CATALYTIC ACTIVITY</scope>
    <scope>TISSUE SPECIFICITY</scope>
    <source>
        <strain>cv. Nanko</strain>
        <tissue>Seedling</tissue>
    </source>
</reference>
<name>C7968_PRUMU</name>
<proteinExistence type="evidence at protein level"/>
<feature type="chain" id="PRO_0000449235" description="Tryptophan N-monooxygenase CYP79A68">
    <location>
        <begin position="1"/>
        <end position="533"/>
    </location>
</feature>
<feature type="transmembrane region" description="Helical" evidence="2">
    <location>
        <begin position="12"/>
        <end position="32"/>
    </location>
</feature>
<feature type="binding site" description="axial binding residue" evidence="1">
    <location>
        <position position="471"/>
    </location>
    <ligand>
        <name>heme</name>
        <dbReference type="ChEBI" id="CHEBI:30413"/>
    </ligand>
    <ligandPart>
        <name>Fe</name>
        <dbReference type="ChEBI" id="CHEBI:18248"/>
    </ligandPart>
</feature>
<feature type="glycosylation site" description="N-linked (GlcNAc...) asparagine" evidence="3">
    <location>
        <position position="209"/>
    </location>
</feature>
<evidence type="ECO:0000250" key="1">
    <source>
        <dbReference type="UniProtKB" id="P04798"/>
    </source>
</evidence>
<evidence type="ECO:0000255" key="2"/>
<evidence type="ECO:0000255" key="3">
    <source>
        <dbReference type="PROSITE-ProRule" id="PRU00498"/>
    </source>
</evidence>
<evidence type="ECO:0000269" key="4">
    <source>
    </source>
</evidence>
<evidence type="ECO:0000303" key="5">
    <source>
    </source>
</evidence>
<evidence type="ECO:0000305" key="6"/>
<keyword id="KW-0325">Glycoprotein</keyword>
<keyword id="KW-0349">Heme</keyword>
<keyword id="KW-0408">Iron</keyword>
<keyword id="KW-0472">Membrane</keyword>
<keyword id="KW-0479">Metal-binding</keyword>
<keyword id="KW-0503">Monooxygenase</keyword>
<keyword id="KW-0560">Oxidoreductase</keyword>
<keyword id="KW-0812">Transmembrane</keyword>
<keyword id="KW-1133">Transmembrane helix</keyword>